<organism>
    <name type="scientific">Yersinia pestis bv. Antiqua (strain Antiqua)</name>
    <dbReference type="NCBI Taxonomy" id="360102"/>
    <lineage>
        <taxon>Bacteria</taxon>
        <taxon>Pseudomonadati</taxon>
        <taxon>Pseudomonadota</taxon>
        <taxon>Gammaproteobacteria</taxon>
        <taxon>Enterobacterales</taxon>
        <taxon>Yersiniaceae</taxon>
        <taxon>Yersinia</taxon>
    </lineage>
</organism>
<protein>
    <recommendedName>
        <fullName evidence="1">Fe/S biogenesis protein NfuA</fullName>
    </recommendedName>
</protein>
<accession>Q1C2L8</accession>
<name>NFUA_YERPA</name>
<proteinExistence type="inferred from homology"/>
<reference key="1">
    <citation type="journal article" date="2006" name="J. Bacteriol.">
        <title>Complete genome sequence of Yersinia pestis strains Antiqua and Nepal516: evidence of gene reduction in an emerging pathogen.</title>
        <authorList>
            <person name="Chain P.S.G."/>
            <person name="Hu P."/>
            <person name="Malfatti S.A."/>
            <person name="Radnedge L."/>
            <person name="Larimer F."/>
            <person name="Vergez L.M."/>
            <person name="Worsham P."/>
            <person name="Chu M.C."/>
            <person name="Andersen G.L."/>
        </authorList>
    </citation>
    <scope>NUCLEOTIDE SEQUENCE [LARGE SCALE GENOMIC DNA]</scope>
    <source>
        <strain>Antiqua</strain>
    </source>
</reference>
<evidence type="ECO:0000255" key="1">
    <source>
        <dbReference type="HAMAP-Rule" id="MF_01637"/>
    </source>
</evidence>
<dbReference type="EMBL" id="CP000308">
    <property type="protein sequence ID" value="ABG15304.1"/>
    <property type="molecule type" value="Genomic_DNA"/>
</dbReference>
<dbReference type="RefSeq" id="WP_002208924.1">
    <property type="nucleotide sequence ID" value="NZ_CP009906.1"/>
</dbReference>
<dbReference type="SMR" id="Q1C2L8"/>
<dbReference type="GeneID" id="57974473"/>
<dbReference type="KEGG" id="ypa:YPA_3342"/>
<dbReference type="Proteomes" id="UP000001971">
    <property type="component" value="Chromosome"/>
</dbReference>
<dbReference type="GO" id="GO:0051539">
    <property type="term" value="F:4 iron, 4 sulfur cluster binding"/>
    <property type="evidence" value="ECO:0007669"/>
    <property type="project" value="UniProtKB-UniRule"/>
</dbReference>
<dbReference type="GO" id="GO:0005506">
    <property type="term" value="F:iron ion binding"/>
    <property type="evidence" value="ECO:0007669"/>
    <property type="project" value="InterPro"/>
</dbReference>
<dbReference type="GO" id="GO:0016226">
    <property type="term" value="P:iron-sulfur cluster assembly"/>
    <property type="evidence" value="ECO:0007669"/>
    <property type="project" value="UniProtKB-UniRule"/>
</dbReference>
<dbReference type="GO" id="GO:0051604">
    <property type="term" value="P:protein maturation"/>
    <property type="evidence" value="ECO:0007669"/>
    <property type="project" value="UniProtKB-UniRule"/>
</dbReference>
<dbReference type="Gene3D" id="3.30.300.130">
    <property type="entry name" value="Fe-S cluster assembly (FSCA)"/>
    <property type="match status" value="1"/>
</dbReference>
<dbReference type="Gene3D" id="2.60.300.12">
    <property type="entry name" value="HesB-like domain"/>
    <property type="match status" value="1"/>
</dbReference>
<dbReference type="HAMAP" id="MF_01637">
    <property type="entry name" value="Fe_S_biogen_NfuA"/>
    <property type="match status" value="1"/>
</dbReference>
<dbReference type="InterPro" id="IPR017726">
    <property type="entry name" value="Fe/S_biogenesis_protein_NfuA"/>
</dbReference>
<dbReference type="InterPro" id="IPR000361">
    <property type="entry name" value="FeS_biogenesis"/>
</dbReference>
<dbReference type="InterPro" id="IPR034904">
    <property type="entry name" value="FSCA_dom_sf"/>
</dbReference>
<dbReference type="InterPro" id="IPR035903">
    <property type="entry name" value="HesB-like_dom_sf"/>
</dbReference>
<dbReference type="InterPro" id="IPR001075">
    <property type="entry name" value="NIF_FeS_clus_asmbl_NifU_C"/>
</dbReference>
<dbReference type="NCBIfam" id="NF008392">
    <property type="entry name" value="PRK11190.1"/>
    <property type="match status" value="1"/>
</dbReference>
<dbReference type="NCBIfam" id="TIGR03341">
    <property type="entry name" value="YhgI_GntY"/>
    <property type="match status" value="1"/>
</dbReference>
<dbReference type="PANTHER" id="PTHR11178:SF51">
    <property type="entry name" value="FE_S BIOGENESIS PROTEIN NFUA"/>
    <property type="match status" value="1"/>
</dbReference>
<dbReference type="PANTHER" id="PTHR11178">
    <property type="entry name" value="IRON-SULFUR CLUSTER SCAFFOLD PROTEIN NFU-RELATED"/>
    <property type="match status" value="1"/>
</dbReference>
<dbReference type="Pfam" id="PF01521">
    <property type="entry name" value="Fe-S_biosyn"/>
    <property type="match status" value="1"/>
</dbReference>
<dbReference type="Pfam" id="PF01106">
    <property type="entry name" value="NifU"/>
    <property type="match status" value="1"/>
</dbReference>
<dbReference type="SUPFAM" id="SSF117916">
    <property type="entry name" value="Fe-S cluster assembly (FSCA) domain-like"/>
    <property type="match status" value="1"/>
</dbReference>
<dbReference type="SUPFAM" id="SSF89360">
    <property type="entry name" value="HesB-like domain"/>
    <property type="match status" value="1"/>
</dbReference>
<feature type="chain" id="PRO_0000268248" description="Fe/S biogenesis protein NfuA">
    <location>
        <begin position="1"/>
        <end position="191"/>
    </location>
</feature>
<feature type="binding site" evidence="1">
    <location>
        <position position="149"/>
    </location>
    <ligand>
        <name>[4Fe-4S] cluster</name>
        <dbReference type="ChEBI" id="CHEBI:49883"/>
    </ligand>
</feature>
<feature type="binding site" evidence="1">
    <location>
        <position position="152"/>
    </location>
    <ligand>
        <name>[4Fe-4S] cluster</name>
        <dbReference type="ChEBI" id="CHEBI:49883"/>
    </ligand>
</feature>
<keyword id="KW-0004">4Fe-4S</keyword>
<keyword id="KW-0408">Iron</keyword>
<keyword id="KW-0411">Iron-sulfur</keyword>
<keyword id="KW-0479">Metal-binding</keyword>
<comment type="function">
    <text evidence="1">Involved in iron-sulfur cluster biogenesis. Binds a 4Fe-4S cluster, can transfer this cluster to apoproteins, and thereby intervenes in the maturation of Fe/S proteins. Could also act as a scaffold/chaperone for damaged Fe/S proteins.</text>
</comment>
<comment type="cofactor">
    <cofactor evidence="1">
        <name>[4Fe-4S] cluster</name>
        <dbReference type="ChEBI" id="CHEBI:49883"/>
    </cofactor>
    <text evidence="1">Binds 1 [4Fe-4S] cluster per subunit. The cluster is presumably bound at the interface of two monomers.</text>
</comment>
<comment type="subunit">
    <text evidence="1">Homodimer.</text>
</comment>
<comment type="similarity">
    <text evidence="1">Belongs to the NfuA family.</text>
</comment>
<sequence>MITITDAAQSHFAKLLANQEEGTQIRVFVINPGTPTAECGVSYCPPDAVEATDTELKFEQLSAYVDELSVPYLQDAEIDFVTDQLGSQLTLKAPNAKMRKVDDSAPLMERVEYVLQSQINPQLAGHGGRVTLMEITPEGLAILQFGGGCNGCSMVDVTLKEGIEKELLQKFPELKGVRDLTEHQRGEHSYY</sequence>
<gene>
    <name evidence="1" type="primary">nfuA</name>
    <name type="ordered locus">YPA_3342</name>
</gene>